<comment type="function">
    <text evidence="1">Involved in copper homeostasis. Affects body morphology and length, egg laying and brood size.</text>
</comment>
<comment type="disruption phenotype">
    <text evidence="1">Reduced copper tolerance, which results in reduced brood size and retarded body length, protruding vulva (pvl) phenotype.</text>
</comment>
<comment type="similarity">
    <text evidence="2">Belongs to the CutC family.</text>
</comment>
<organism>
    <name type="scientific">Caenorhabditis elegans</name>
    <dbReference type="NCBI Taxonomy" id="6239"/>
    <lineage>
        <taxon>Eukaryota</taxon>
        <taxon>Metazoa</taxon>
        <taxon>Ecdysozoa</taxon>
        <taxon>Nematoda</taxon>
        <taxon>Chromadorea</taxon>
        <taxon>Rhabditida</taxon>
        <taxon>Rhabditina</taxon>
        <taxon>Rhabditomorpha</taxon>
        <taxon>Rhabditoidea</taxon>
        <taxon>Rhabditidae</taxon>
        <taxon>Peloderinae</taxon>
        <taxon>Caenorhabditis</taxon>
    </lineage>
</organism>
<protein>
    <recommendedName>
        <fullName>Copper homeostasis protein cutC homolog</fullName>
    </recommendedName>
</protein>
<keyword id="KW-0186">Copper</keyword>
<keyword id="KW-1185">Reference proteome</keyword>
<feature type="chain" id="PRO_0000215090" description="Copper homeostasis protein cutC homolog">
    <location>
        <begin position="1"/>
        <end position="250"/>
    </location>
</feature>
<dbReference type="EMBL" id="FO081668">
    <property type="protein sequence ID" value="CCD73206.1"/>
    <property type="molecule type" value="Genomic_DNA"/>
</dbReference>
<dbReference type="PIR" id="S44656">
    <property type="entry name" value="S44656"/>
</dbReference>
<dbReference type="RefSeq" id="NP_498855.1">
    <property type="nucleotide sequence ID" value="NM_066454.6"/>
</dbReference>
<dbReference type="SMR" id="P34630"/>
<dbReference type="BioGRID" id="41390">
    <property type="interactions" value="2"/>
</dbReference>
<dbReference type="DIP" id="DIP-25191N"/>
<dbReference type="FunCoup" id="P34630">
    <property type="interactions" value="400"/>
</dbReference>
<dbReference type="STRING" id="6239.ZK353.7.1"/>
<dbReference type="PaxDb" id="6239-ZK353.7"/>
<dbReference type="PeptideAtlas" id="P34630"/>
<dbReference type="EnsemblMetazoa" id="ZK353.7.1">
    <property type="protein sequence ID" value="ZK353.7.1"/>
    <property type="gene ID" value="WBGene00022702"/>
</dbReference>
<dbReference type="GeneID" id="176186"/>
<dbReference type="KEGG" id="cel:CELE_ZK353.7"/>
<dbReference type="AGR" id="WB:WBGene00022702"/>
<dbReference type="CTD" id="176186"/>
<dbReference type="WormBase" id="ZK353.7">
    <property type="protein sequence ID" value="CE00391"/>
    <property type="gene ID" value="WBGene00022702"/>
    <property type="gene designation" value="cutc-1"/>
</dbReference>
<dbReference type="eggNOG" id="KOG4013">
    <property type="taxonomic scope" value="Eukaryota"/>
</dbReference>
<dbReference type="GeneTree" id="ENSGT00390000008454"/>
<dbReference type="HOGENOM" id="CLU_050555_3_1_1"/>
<dbReference type="InParanoid" id="P34630"/>
<dbReference type="OMA" id="CRWTFHR"/>
<dbReference type="OrthoDB" id="7392499at2759"/>
<dbReference type="PhylomeDB" id="P34630"/>
<dbReference type="PRO" id="PR:P34630"/>
<dbReference type="Proteomes" id="UP000001940">
    <property type="component" value="Chromosome III"/>
</dbReference>
<dbReference type="Bgee" id="WBGene00022702">
    <property type="expression patterns" value="Expressed in germ line (C elegans) and 4 other cell types or tissues"/>
</dbReference>
<dbReference type="GO" id="GO:0030054">
    <property type="term" value="C:cell junction"/>
    <property type="evidence" value="ECO:0007005"/>
    <property type="project" value="WormBase"/>
</dbReference>
<dbReference type="GO" id="GO:0005737">
    <property type="term" value="C:cytoplasm"/>
    <property type="evidence" value="ECO:0000250"/>
    <property type="project" value="WormBase"/>
</dbReference>
<dbReference type="GO" id="GO:0005829">
    <property type="term" value="C:cytosol"/>
    <property type="evidence" value="ECO:0000304"/>
    <property type="project" value="Reactome"/>
</dbReference>
<dbReference type="GO" id="GO:0005634">
    <property type="term" value="C:nucleus"/>
    <property type="evidence" value="ECO:0000250"/>
    <property type="project" value="WormBase"/>
</dbReference>
<dbReference type="GO" id="GO:0055120">
    <property type="term" value="C:striated muscle dense body"/>
    <property type="evidence" value="ECO:0007005"/>
    <property type="project" value="WormBase"/>
</dbReference>
<dbReference type="GO" id="GO:0005507">
    <property type="term" value="F:copper ion binding"/>
    <property type="evidence" value="ECO:0000318"/>
    <property type="project" value="GO_Central"/>
</dbReference>
<dbReference type="GO" id="GO:0055070">
    <property type="term" value="P:copper ion homeostasis"/>
    <property type="evidence" value="ECO:0000315"/>
    <property type="project" value="WormBase"/>
</dbReference>
<dbReference type="GO" id="GO:0018991">
    <property type="term" value="P:egg-laying behavior"/>
    <property type="evidence" value="ECO:0000315"/>
    <property type="project" value="WormBase"/>
</dbReference>
<dbReference type="GO" id="GO:0036498">
    <property type="term" value="P:IRE1-mediated unfolded protein response"/>
    <property type="evidence" value="ECO:0007007"/>
    <property type="project" value="WormBase"/>
</dbReference>
<dbReference type="GO" id="GO:0035264">
    <property type="term" value="P:multicellular organism growth"/>
    <property type="evidence" value="ECO:0000315"/>
    <property type="project" value="WormBase"/>
</dbReference>
<dbReference type="GO" id="GO:0048609">
    <property type="term" value="P:multicellular organismal reproductive process"/>
    <property type="evidence" value="ECO:0000315"/>
    <property type="project" value="WormBase"/>
</dbReference>
<dbReference type="GO" id="GO:0046688">
    <property type="term" value="P:response to copper ion"/>
    <property type="evidence" value="ECO:0000315"/>
    <property type="project" value="WormBase"/>
</dbReference>
<dbReference type="GO" id="GO:0040025">
    <property type="term" value="P:vulval development"/>
    <property type="evidence" value="ECO:0000315"/>
    <property type="project" value="WormBase"/>
</dbReference>
<dbReference type="FunFam" id="3.20.20.380:FF:000001">
    <property type="entry name" value="Copper homeostasis protein CutC"/>
    <property type="match status" value="1"/>
</dbReference>
<dbReference type="Gene3D" id="3.20.20.380">
    <property type="entry name" value="Copper homeostasis (CutC) domain"/>
    <property type="match status" value="1"/>
</dbReference>
<dbReference type="HAMAP" id="MF_00795">
    <property type="entry name" value="CutC"/>
    <property type="match status" value="1"/>
</dbReference>
<dbReference type="InterPro" id="IPR005627">
    <property type="entry name" value="CutC-like"/>
</dbReference>
<dbReference type="InterPro" id="IPR036822">
    <property type="entry name" value="CutC-like_dom_sf"/>
</dbReference>
<dbReference type="PANTHER" id="PTHR12598">
    <property type="entry name" value="COPPER HOMEOSTASIS PROTEIN CUTC"/>
    <property type="match status" value="1"/>
</dbReference>
<dbReference type="PANTHER" id="PTHR12598:SF0">
    <property type="entry name" value="COPPER HOMEOSTASIS PROTEIN CUTC HOMOLOG"/>
    <property type="match status" value="1"/>
</dbReference>
<dbReference type="Pfam" id="PF03932">
    <property type="entry name" value="CutC"/>
    <property type="match status" value="1"/>
</dbReference>
<dbReference type="SUPFAM" id="SSF110395">
    <property type="entry name" value="CutC-like"/>
    <property type="match status" value="1"/>
</dbReference>
<reference key="1">
    <citation type="journal article" date="1994" name="Nature">
        <title>2.2 Mb of contiguous nucleotide sequence from chromosome III of C. elegans.</title>
        <authorList>
            <person name="Wilson R."/>
            <person name="Ainscough R."/>
            <person name="Anderson K."/>
            <person name="Baynes C."/>
            <person name="Berks M."/>
            <person name="Bonfield J."/>
            <person name="Burton J."/>
            <person name="Connell M."/>
            <person name="Copsey T."/>
            <person name="Cooper J."/>
            <person name="Coulson A."/>
            <person name="Craxton M."/>
            <person name="Dear S."/>
            <person name="Du Z."/>
            <person name="Durbin R."/>
            <person name="Favello A."/>
            <person name="Fraser A."/>
            <person name="Fulton L."/>
            <person name="Gardner A."/>
            <person name="Green P."/>
            <person name="Hawkins T."/>
            <person name="Hillier L."/>
            <person name="Jier M."/>
            <person name="Johnston L."/>
            <person name="Jones M."/>
            <person name="Kershaw J."/>
            <person name="Kirsten J."/>
            <person name="Laisster N."/>
            <person name="Latreille P."/>
            <person name="Lightning J."/>
            <person name="Lloyd C."/>
            <person name="Mortimore B."/>
            <person name="O'Callaghan M."/>
            <person name="Parsons J."/>
            <person name="Percy C."/>
            <person name="Rifken L."/>
            <person name="Roopra A."/>
            <person name="Saunders D."/>
            <person name="Shownkeen R."/>
            <person name="Sims M."/>
            <person name="Smaldon N."/>
            <person name="Smith A."/>
            <person name="Smith M."/>
            <person name="Sonnhammer E."/>
            <person name="Staden R."/>
            <person name="Sulston J."/>
            <person name="Thierry-Mieg J."/>
            <person name="Thomas K."/>
            <person name="Vaudin M."/>
            <person name="Vaughan K."/>
            <person name="Waterston R."/>
            <person name="Watson A."/>
            <person name="Weinstock L."/>
            <person name="Wilkinson-Sproat J."/>
            <person name="Wohldman P."/>
        </authorList>
    </citation>
    <scope>NUCLEOTIDE SEQUENCE [LARGE SCALE GENOMIC DNA]</scope>
    <source>
        <strain>Bristol N2</strain>
    </source>
</reference>
<reference key="2">
    <citation type="journal article" date="1998" name="Science">
        <title>Genome sequence of the nematode C. elegans: a platform for investigating biology.</title>
        <authorList>
            <consortium name="The C. elegans sequencing consortium"/>
        </authorList>
    </citation>
    <scope>NUCLEOTIDE SEQUENCE [LARGE SCALE GENOMIC DNA]</scope>
    <source>
        <strain>Bristol N2</strain>
    </source>
</reference>
<reference key="3">
    <citation type="journal article" date="2008" name="Toxicol. Sci.">
        <title>Knock down of Caenorhabditis elegans cutc-1 exacerbates the sensitivity toward high levels of copper.</title>
        <authorList>
            <person name="Calafato S."/>
            <person name="Swain S."/>
            <person name="Hughes S."/>
            <person name="Kille P."/>
            <person name="Sturzenbaum S.R."/>
        </authorList>
    </citation>
    <scope>FUNCTION</scope>
    <scope>DISRUPTION PHENOTYPE</scope>
</reference>
<name>CUTC_CAEEL</name>
<accession>P34630</accession>
<evidence type="ECO:0000269" key="1">
    <source>
    </source>
</evidence>
<evidence type="ECO:0000305" key="2"/>
<gene>
    <name type="primary">cutc-1</name>
    <name type="ORF">ZK353.7</name>
</gene>
<proteinExistence type="inferred from homology"/>
<sequence length="250" mass="27262">MTETESQKQIKLEICIDNLESAENAVAGGADRLEVCSALQLGGLTPSVGFVSILSYKYPDIPLYCMIRQRAGDFVYNEDEMAANMEDVEWLKKAGATGFVFGALTSAGSLDRTSCQSIIETARPHPVTFHRAIDVAYDWKTCLEDAIDVGFKAVLTSGQEPSALDGVYIIREMQELHKGKIDVLAGCGVNSSNVANLVEWTKCHWYHASASVAKKNAPLNKVSMGKQDNQPSRVTSLEEVRMLKATLAPV</sequence>